<keyword id="KW-0028">Amino-acid biosynthesis</keyword>
<keyword id="KW-0057">Aromatic amino acid biosynthesis</keyword>
<keyword id="KW-0170">Cobalt</keyword>
<keyword id="KW-0963">Cytoplasm</keyword>
<keyword id="KW-0456">Lyase</keyword>
<keyword id="KW-0479">Metal-binding</keyword>
<keyword id="KW-0520">NAD</keyword>
<keyword id="KW-0547">Nucleotide-binding</keyword>
<keyword id="KW-0862">Zinc</keyword>
<evidence type="ECO:0000255" key="1">
    <source>
        <dbReference type="HAMAP-Rule" id="MF_00110"/>
    </source>
</evidence>
<protein>
    <recommendedName>
        <fullName evidence="1">3-dehydroquinate synthase</fullName>
        <shortName evidence="1">DHQS</shortName>
        <ecNumber evidence="1">4.2.3.4</ecNumber>
    </recommendedName>
</protein>
<gene>
    <name evidence="1" type="primary">aroB</name>
    <name type="ordered locus">RSKD131_1146</name>
</gene>
<comment type="function">
    <text evidence="1">Catalyzes the conversion of 3-deoxy-D-arabino-heptulosonate 7-phosphate (DAHP) to dehydroquinate (DHQ).</text>
</comment>
<comment type="catalytic activity">
    <reaction evidence="1">
        <text>7-phospho-2-dehydro-3-deoxy-D-arabino-heptonate = 3-dehydroquinate + phosphate</text>
        <dbReference type="Rhea" id="RHEA:21968"/>
        <dbReference type="ChEBI" id="CHEBI:32364"/>
        <dbReference type="ChEBI" id="CHEBI:43474"/>
        <dbReference type="ChEBI" id="CHEBI:58394"/>
        <dbReference type="EC" id="4.2.3.4"/>
    </reaction>
</comment>
<comment type="cofactor">
    <cofactor evidence="1">
        <name>Co(2+)</name>
        <dbReference type="ChEBI" id="CHEBI:48828"/>
    </cofactor>
    <cofactor evidence="1">
        <name>Zn(2+)</name>
        <dbReference type="ChEBI" id="CHEBI:29105"/>
    </cofactor>
    <text evidence="1">Binds 1 divalent metal cation per subunit. Can use either Co(2+) or Zn(2+).</text>
</comment>
<comment type="cofactor">
    <cofactor evidence="1">
        <name>NAD(+)</name>
        <dbReference type="ChEBI" id="CHEBI:57540"/>
    </cofactor>
</comment>
<comment type="pathway">
    <text evidence="1">Metabolic intermediate biosynthesis; chorismate biosynthesis; chorismate from D-erythrose 4-phosphate and phosphoenolpyruvate: step 2/7.</text>
</comment>
<comment type="subcellular location">
    <subcellularLocation>
        <location evidence="1">Cytoplasm</location>
    </subcellularLocation>
</comment>
<comment type="similarity">
    <text evidence="1">Belongs to the sugar phosphate cyclases superfamily. Dehydroquinate synthase family.</text>
</comment>
<reference key="1">
    <citation type="journal article" date="2009" name="J. Bacteriol.">
        <title>Complete genome sequence of Rhodobacter sphaeroides KD131.</title>
        <authorList>
            <person name="Lim S.-K."/>
            <person name="Kim S.J."/>
            <person name="Cha S.H."/>
            <person name="Oh Y.-K."/>
            <person name="Rhee H.-J."/>
            <person name="Kim M.-S."/>
            <person name="Lee J.K."/>
        </authorList>
    </citation>
    <scope>NUCLEOTIDE SEQUENCE [LARGE SCALE GENOMIC DNA]</scope>
    <source>
        <strain>KD131 / KCTC 12085</strain>
    </source>
</reference>
<accession>B9KSJ9</accession>
<sequence length="370" mass="39410">MTVDAVRVELGARAYEVRIGPGLIARAGAEIAPLLRRPKVAILTDETVAGLHLDPFRQALVEAGIASSALALPAGEATKGWPQFARAVEWLLEEKVERRDVVVALGGGVIGDLAGFAAAVLRRGVRFVQVPTTLLAQVDSSVGGKTGINTAQGKNLVGAFHQPSLVLADIGVLETLPPRDFRAGYGEVVKYGLLGDADFYEWLEGAGPRLAADAEARQRAVRRSVEMKAEIVARDETEEGDRALLNLGHTFCHALEKATGYSDRLLHGEGVAIGCALAFELSQRLGLCAQEAPSRLRAHLRAMGMKVDLRDIPGDLPSAEALLALMAQDKKVVDGKLRFILARGIGQAFVADDVPGDVVRALLEDALAER</sequence>
<name>AROB_CERSK</name>
<proteinExistence type="inferred from homology"/>
<feature type="chain" id="PRO_1000119087" description="3-dehydroquinate synthase">
    <location>
        <begin position="1"/>
        <end position="370"/>
    </location>
</feature>
<feature type="binding site" evidence="1">
    <location>
        <begin position="108"/>
        <end position="112"/>
    </location>
    <ligand>
        <name>NAD(+)</name>
        <dbReference type="ChEBI" id="CHEBI:57540"/>
    </ligand>
</feature>
<feature type="binding site" evidence="1">
    <location>
        <begin position="132"/>
        <end position="133"/>
    </location>
    <ligand>
        <name>NAD(+)</name>
        <dbReference type="ChEBI" id="CHEBI:57540"/>
    </ligand>
</feature>
<feature type="binding site" evidence="1">
    <location>
        <position position="145"/>
    </location>
    <ligand>
        <name>NAD(+)</name>
        <dbReference type="ChEBI" id="CHEBI:57540"/>
    </ligand>
</feature>
<feature type="binding site" evidence="1">
    <location>
        <position position="154"/>
    </location>
    <ligand>
        <name>NAD(+)</name>
        <dbReference type="ChEBI" id="CHEBI:57540"/>
    </ligand>
</feature>
<feature type="binding site" evidence="1">
    <location>
        <position position="187"/>
    </location>
    <ligand>
        <name>Zn(2+)</name>
        <dbReference type="ChEBI" id="CHEBI:29105"/>
    </ligand>
</feature>
<feature type="binding site" evidence="1">
    <location>
        <position position="249"/>
    </location>
    <ligand>
        <name>Zn(2+)</name>
        <dbReference type="ChEBI" id="CHEBI:29105"/>
    </ligand>
</feature>
<feature type="binding site" evidence="1">
    <location>
        <position position="267"/>
    </location>
    <ligand>
        <name>Zn(2+)</name>
        <dbReference type="ChEBI" id="CHEBI:29105"/>
    </ligand>
</feature>
<organism>
    <name type="scientific">Cereibacter sphaeroides (strain KD131 / KCTC 12085)</name>
    <name type="common">Rhodobacter sphaeroides</name>
    <dbReference type="NCBI Taxonomy" id="557760"/>
    <lineage>
        <taxon>Bacteria</taxon>
        <taxon>Pseudomonadati</taxon>
        <taxon>Pseudomonadota</taxon>
        <taxon>Alphaproteobacteria</taxon>
        <taxon>Rhodobacterales</taxon>
        <taxon>Paracoccaceae</taxon>
        <taxon>Cereibacter</taxon>
    </lineage>
</organism>
<dbReference type="EC" id="4.2.3.4" evidence="1"/>
<dbReference type="EMBL" id="CP001150">
    <property type="protein sequence ID" value="ACM01006.1"/>
    <property type="molecule type" value="Genomic_DNA"/>
</dbReference>
<dbReference type="RefSeq" id="WP_015920549.1">
    <property type="nucleotide sequence ID" value="NC_011963.1"/>
</dbReference>
<dbReference type="SMR" id="B9KSJ9"/>
<dbReference type="GeneID" id="67446574"/>
<dbReference type="KEGG" id="rsk:RSKD131_1146"/>
<dbReference type="HOGENOM" id="CLU_001201_0_2_5"/>
<dbReference type="UniPathway" id="UPA00053">
    <property type="reaction ID" value="UER00085"/>
</dbReference>
<dbReference type="GO" id="GO:0005737">
    <property type="term" value="C:cytoplasm"/>
    <property type="evidence" value="ECO:0007669"/>
    <property type="project" value="UniProtKB-SubCell"/>
</dbReference>
<dbReference type="GO" id="GO:0003856">
    <property type="term" value="F:3-dehydroquinate synthase activity"/>
    <property type="evidence" value="ECO:0007669"/>
    <property type="project" value="UniProtKB-UniRule"/>
</dbReference>
<dbReference type="GO" id="GO:0046872">
    <property type="term" value="F:metal ion binding"/>
    <property type="evidence" value="ECO:0007669"/>
    <property type="project" value="UniProtKB-KW"/>
</dbReference>
<dbReference type="GO" id="GO:0000166">
    <property type="term" value="F:nucleotide binding"/>
    <property type="evidence" value="ECO:0007669"/>
    <property type="project" value="UniProtKB-KW"/>
</dbReference>
<dbReference type="GO" id="GO:0008652">
    <property type="term" value="P:amino acid biosynthetic process"/>
    <property type="evidence" value="ECO:0007669"/>
    <property type="project" value="UniProtKB-KW"/>
</dbReference>
<dbReference type="GO" id="GO:0009073">
    <property type="term" value="P:aromatic amino acid family biosynthetic process"/>
    <property type="evidence" value="ECO:0007669"/>
    <property type="project" value="UniProtKB-KW"/>
</dbReference>
<dbReference type="GO" id="GO:0009423">
    <property type="term" value="P:chorismate biosynthetic process"/>
    <property type="evidence" value="ECO:0007669"/>
    <property type="project" value="UniProtKB-UniRule"/>
</dbReference>
<dbReference type="CDD" id="cd08195">
    <property type="entry name" value="DHQS"/>
    <property type="match status" value="1"/>
</dbReference>
<dbReference type="FunFam" id="3.40.50.1970:FF:000007">
    <property type="entry name" value="Pentafunctional AROM polypeptide"/>
    <property type="match status" value="1"/>
</dbReference>
<dbReference type="Gene3D" id="3.40.50.1970">
    <property type="match status" value="1"/>
</dbReference>
<dbReference type="Gene3D" id="1.20.1090.10">
    <property type="entry name" value="Dehydroquinate synthase-like - alpha domain"/>
    <property type="match status" value="1"/>
</dbReference>
<dbReference type="HAMAP" id="MF_00110">
    <property type="entry name" value="DHQ_synthase"/>
    <property type="match status" value="1"/>
</dbReference>
<dbReference type="InterPro" id="IPR050071">
    <property type="entry name" value="Dehydroquinate_synthase"/>
</dbReference>
<dbReference type="InterPro" id="IPR016037">
    <property type="entry name" value="DHQ_synth_AroB"/>
</dbReference>
<dbReference type="InterPro" id="IPR030963">
    <property type="entry name" value="DHQ_synth_fam"/>
</dbReference>
<dbReference type="InterPro" id="IPR030960">
    <property type="entry name" value="DHQS/DOIS_N"/>
</dbReference>
<dbReference type="InterPro" id="IPR056179">
    <property type="entry name" value="DHQS_C"/>
</dbReference>
<dbReference type="NCBIfam" id="TIGR01357">
    <property type="entry name" value="aroB"/>
    <property type="match status" value="1"/>
</dbReference>
<dbReference type="PANTHER" id="PTHR43622">
    <property type="entry name" value="3-DEHYDROQUINATE SYNTHASE"/>
    <property type="match status" value="1"/>
</dbReference>
<dbReference type="PANTHER" id="PTHR43622:SF7">
    <property type="entry name" value="3-DEHYDROQUINATE SYNTHASE, CHLOROPLASTIC"/>
    <property type="match status" value="1"/>
</dbReference>
<dbReference type="Pfam" id="PF01761">
    <property type="entry name" value="DHQ_synthase"/>
    <property type="match status" value="1"/>
</dbReference>
<dbReference type="Pfam" id="PF24621">
    <property type="entry name" value="DHQS_C"/>
    <property type="match status" value="1"/>
</dbReference>
<dbReference type="PIRSF" id="PIRSF001455">
    <property type="entry name" value="DHQ_synth"/>
    <property type="match status" value="1"/>
</dbReference>
<dbReference type="SUPFAM" id="SSF56796">
    <property type="entry name" value="Dehydroquinate synthase-like"/>
    <property type="match status" value="1"/>
</dbReference>